<protein>
    <recommendedName>
        <fullName evidence="6">Galactosylceramide sulfotransferase</fullName>
        <shortName evidence="1">GalCer sulfotransferase</shortName>
        <ecNumber evidence="4">2.8.2.11</ecNumber>
    </recommendedName>
    <alternativeName>
        <fullName evidence="1">3'-phosphoadenosine-5'-phosphosulfate:GalCer sulfotransferase</fullName>
    </alternativeName>
    <alternativeName>
        <fullName evidence="1">3'-phosphoadenylylsulfate:galactosylceramide 3'-sulfotransferase</fullName>
    </alternativeName>
    <alternativeName>
        <fullName evidence="5">Cerebroside sulfotransferase</fullName>
    </alternativeName>
</protein>
<keyword id="KW-0325">Glycoprotein</keyword>
<keyword id="KW-0333">Golgi apparatus</keyword>
<keyword id="KW-0443">Lipid metabolism</keyword>
<keyword id="KW-0472">Membrane</keyword>
<keyword id="KW-1185">Reference proteome</keyword>
<keyword id="KW-0735">Signal-anchor</keyword>
<keyword id="KW-0746">Sphingolipid metabolism</keyword>
<keyword id="KW-0808">Transferase</keyword>
<keyword id="KW-0812">Transmembrane</keyword>
<keyword id="KW-1133">Transmembrane helix</keyword>
<proteinExistence type="evidence at protein level"/>
<name>G3ST1_MOUSE</name>
<sequence>MTLLPKKPCKSKAKGLLLGALFTSFLLLLYSYVVPPLYPNMAFTTSEAAAPCSPIPNEPVAATPANGSAGGCQPRRDIVFMKTHKTASSTLLNILFRFGQKHELKFAFPNGRNDFHYPSYFARSLVQDYRPGACFNIICNHMRFHYEEVRGLVRPGATFITVIRDPARLFESSFHYFGSVVPLTWKLSSRDKLAEFLQDPDRYYDPSSYNAHYLRNLLFFDLGYDSSLDPASPRVQEHILEVERRFHLVLLQEYFDESLVLLRELLCWDLEDVLYFKLNARRDSPVPRLSGELYRRATAWNLLDVRLYRHFNASFWRKVEAFGRERMAREVAELRQANEHMRHICIDGGQAVGAEAIQDSAMQPWQPLGIKSILGYNLKKSIGPQHEQLCRRMLTPEIQYLSDLGANLWVTKLWKFLRDFLRW</sequence>
<dbReference type="EC" id="2.8.2.11" evidence="4"/>
<dbReference type="EMBL" id="AB032940">
    <property type="protein sequence ID" value="BAA93009.1"/>
    <property type="molecule type" value="Genomic_DNA"/>
</dbReference>
<dbReference type="EMBL" id="AB032939">
    <property type="protein sequence ID" value="BAA93008.1"/>
    <property type="molecule type" value="mRNA"/>
</dbReference>
<dbReference type="EMBL" id="AK007645">
    <property type="protein sequence ID" value="BAB25160.1"/>
    <property type="molecule type" value="mRNA"/>
</dbReference>
<dbReference type="EMBL" id="BC026806">
    <property type="protein sequence ID" value="AAH26806.1"/>
    <property type="molecule type" value="mRNA"/>
</dbReference>
<dbReference type="CCDS" id="CCDS24373.1"/>
<dbReference type="RefSeq" id="NP_001171162.1">
    <property type="nucleotide sequence ID" value="NM_001177691.1"/>
</dbReference>
<dbReference type="RefSeq" id="NP_001171174.1">
    <property type="nucleotide sequence ID" value="NM_001177703.1"/>
</dbReference>
<dbReference type="RefSeq" id="NP_001369219.1">
    <property type="nucleotide sequence ID" value="NM_001382290.1"/>
</dbReference>
<dbReference type="RefSeq" id="NP_001369220.1">
    <property type="nucleotide sequence ID" value="NM_001382291.1"/>
</dbReference>
<dbReference type="RefSeq" id="NP_058618.2">
    <property type="nucleotide sequence ID" value="NM_016922.3"/>
</dbReference>
<dbReference type="RefSeq" id="XP_006514819.2">
    <property type="nucleotide sequence ID" value="XM_006514756.5"/>
</dbReference>
<dbReference type="RefSeq" id="XP_006514820.1">
    <property type="nucleotide sequence ID" value="XM_006514757.5"/>
</dbReference>
<dbReference type="FunCoup" id="Q9JHE4">
    <property type="interactions" value="170"/>
</dbReference>
<dbReference type="STRING" id="10090.ENSMUSP00000058348"/>
<dbReference type="GlyCosmos" id="Q9JHE4">
    <property type="glycosylation" value="2 sites, No reported glycans"/>
</dbReference>
<dbReference type="GlyGen" id="Q9JHE4">
    <property type="glycosylation" value="3 sites"/>
</dbReference>
<dbReference type="iPTMnet" id="Q9JHE4"/>
<dbReference type="PhosphoSitePlus" id="Q9JHE4"/>
<dbReference type="PaxDb" id="10090-ENSMUSP00000058348"/>
<dbReference type="ProteomicsDB" id="273404"/>
<dbReference type="Antibodypedia" id="243">
    <property type="antibodies" value="145 antibodies from 21 providers"/>
</dbReference>
<dbReference type="DNASU" id="53897"/>
<dbReference type="Ensembl" id="ENSMUST00000063004.14">
    <property type="protein sequence ID" value="ENSMUSP00000058348.8"/>
    <property type="gene ID" value="ENSMUSG00000049721.15"/>
</dbReference>
<dbReference type="Ensembl" id="ENSMUST00000078757.8">
    <property type="protein sequence ID" value="ENSMUSP00000077815.2"/>
    <property type="gene ID" value="ENSMUSG00000049721.15"/>
</dbReference>
<dbReference type="Ensembl" id="ENSMUST00000109981.2">
    <property type="protein sequence ID" value="ENSMUSP00000105608.2"/>
    <property type="gene ID" value="ENSMUSG00000049721.15"/>
</dbReference>
<dbReference type="GeneID" id="53897"/>
<dbReference type="KEGG" id="mmu:53897"/>
<dbReference type="UCSC" id="uc007hub.2">
    <property type="organism name" value="mouse"/>
</dbReference>
<dbReference type="AGR" id="MGI:1858277"/>
<dbReference type="CTD" id="9514"/>
<dbReference type="MGI" id="MGI:1858277">
    <property type="gene designation" value="Gal3st1"/>
</dbReference>
<dbReference type="VEuPathDB" id="HostDB:ENSMUSG00000049721"/>
<dbReference type="eggNOG" id="ENOG502QTXT">
    <property type="taxonomic scope" value="Eukaryota"/>
</dbReference>
<dbReference type="GeneTree" id="ENSGT00950000182923"/>
<dbReference type="HOGENOM" id="CLU_040616_1_1_1"/>
<dbReference type="InParanoid" id="Q9JHE4"/>
<dbReference type="OMA" id="CAPKVDI"/>
<dbReference type="OrthoDB" id="514299at2759"/>
<dbReference type="PhylomeDB" id="Q9JHE4"/>
<dbReference type="TreeFam" id="TF314802"/>
<dbReference type="BRENDA" id="2.8.2.11">
    <property type="organism ID" value="3474"/>
</dbReference>
<dbReference type="Reactome" id="R-MMU-9840309">
    <property type="pathway name" value="Glycosphingolipid biosynthesis"/>
</dbReference>
<dbReference type="UniPathway" id="UPA00222"/>
<dbReference type="BioGRID-ORCS" id="53897">
    <property type="hits" value="4 hits in 80 CRISPR screens"/>
</dbReference>
<dbReference type="ChiTaRS" id="Casz1">
    <property type="organism name" value="mouse"/>
</dbReference>
<dbReference type="PRO" id="PR:Q9JHE4"/>
<dbReference type="Proteomes" id="UP000000589">
    <property type="component" value="Chromosome 11"/>
</dbReference>
<dbReference type="RNAct" id="Q9JHE4">
    <property type="molecule type" value="protein"/>
</dbReference>
<dbReference type="Bgee" id="ENSMUSG00000049721">
    <property type="expression patterns" value="Expressed in pyloric antrum and 174 other cell types or tissues"/>
</dbReference>
<dbReference type="GO" id="GO:0000139">
    <property type="term" value="C:Golgi membrane"/>
    <property type="evidence" value="ECO:0000304"/>
    <property type="project" value="MGI"/>
</dbReference>
<dbReference type="GO" id="GO:0016020">
    <property type="term" value="C:membrane"/>
    <property type="evidence" value="ECO:0000250"/>
    <property type="project" value="MGI"/>
</dbReference>
<dbReference type="GO" id="GO:0001733">
    <property type="term" value="F:galactosylceramide sulfotransferase activity"/>
    <property type="evidence" value="ECO:0000314"/>
    <property type="project" value="MGI"/>
</dbReference>
<dbReference type="GO" id="GO:0006682">
    <property type="term" value="P:galactosylceramide biosynthetic process"/>
    <property type="evidence" value="ECO:0000314"/>
    <property type="project" value="MGI"/>
</dbReference>
<dbReference type="GO" id="GO:0006681">
    <property type="term" value="P:galactosylceramide metabolic process"/>
    <property type="evidence" value="ECO:0000315"/>
    <property type="project" value="UniProtKB"/>
</dbReference>
<dbReference type="GO" id="GO:0046486">
    <property type="term" value="P:glycerolipid metabolic process"/>
    <property type="evidence" value="ECO:0000250"/>
    <property type="project" value="UniProtKB"/>
</dbReference>
<dbReference type="GO" id="GO:0009247">
    <property type="term" value="P:glycolipid biosynthetic process"/>
    <property type="evidence" value="ECO:0000304"/>
    <property type="project" value="MGI"/>
</dbReference>
<dbReference type="GO" id="GO:0042552">
    <property type="term" value="P:myelination"/>
    <property type="evidence" value="ECO:0000315"/>
    <property type="project" value="MGI"/>
</dbReference>
<dbReference type="GO" id="GO:0007283">
    <property type="term" value="P:spermatogenesis"/>
    <property type="evidence" value="ECO:0000315"/>
    <property type="project" value="MGI"/>
</dbReference>
<dbReference type="FunFam" id="3.40.50.300:FF:000807">
    <property type="entry name" value="galactosylceramide sulfotransferase isoform X1"/>
    <property type="match status" value="1"/>
</dbReference>
<dbReference type="Gene3D" id="3.40.50.300">
    <property type="entry name" value="P-loop containing nucleotide triphosphate hydrolases"/>
    <property type="match status" value="1"/>
</dbReference>
<dbReference type="InterPro" id="IPR009729">
    <property type="entry name" value="Gal-3-0_sulfotransfrase"/>
</dbReference>
<dbReference type="InterPro" id="IPR027417">
    <property type="entry name" value="P-loop_NTPase"/>
</dbReference>
<dbReference type="PANTHER" id="PTHR14647">
    <property type="entry name" value="GALACTOSE-3-O-SULFOTRANSFERASE"/>
    <property type="match status" value="1"/>
</dbReference>
<dbReference type="PANTHER" id="PTHR14647:SF56">
    <property type="entry name" value="GALACTOSYLCERAMIDE SULFOTRANSFERASE"/>
    <property type="match status" value="1"/>
</dbReference>
<dbReference type="Pfam" id="PF06990">
    <property type="entry name" value="Gal-3-0_sulfotr"/>
    <property type="match status" value="1"/>
</dbReference>
<dbReference type="SUPFAM" id="SSF52540">
    <property type="entry name" value="P-loop containing nucleoside triphosphate hydrolases"/>
    <property type="match status" value="1"/>
</dbReference>
<feature type="chain" id="PRO_0000085202" description="Galactosylceramide sulfotransferase">
    <location>
        <begin position="1"/>
        <end position="423"/>
    </location>
</feature>
<feature type="topological domain" description="Cytoplasmic" evidence="2">
    <location>
        <begin position="1"/>
        <end position="12"/>
    </location>
</feature>
<feature type="transmembrane region" description="Helical; Signal-anchor for type II membrane protein" evidence="2">
    <location>
        <begin position="13"/>
        <end position="35"/>
    </location>
</feature>
<feature type="topological domain" description="Lumenal" evidence="2">
    <location>
        <begin position="36"/>
        <end position="423"/>
    </location>
</feature>
<feature type="glycosylation site" description="N-linked (GlcNAc...) asparagine" evidence="2">
    <location>
        <position position="66"/>
    </location>
</feature>
<feature type="glycosylation site" description="N-linked (GlcNAc...) asparagine" evidence="2">
    <location>
        <position position="312"/>
    </location>
</feature>
<feature type="sequence conflict" description="In Ref. 2; BAB25160." evidence="6" ref="2">
    <original>L</original>
    <variation>P</variation>
    <location>
        <position position="18"/>
    </location>
</feature>
<feature type="sequence conflict" description="In Ref. 2; BAB25160." evidence="6" ref="2">
    <original>R</original>
    <variation>Q</variation>
    <location>
        <position position="263"/>
    </location>
</feature>
<feature type="sequence conflict" description="In Ref. 2; BAB25160." evidence="6" ref="2">
    <original>E</original>
    <variation>K</variation>
    <location>
        <position position="271"/>
    </location>
</feature>
<feature type="sequence conflict" description="In Ref. 1; BAA93009/BAA93008." evidence="6" ref="1">
    <original>Q</original>
    <variation>R</variation>
    <location>
        <position position="358"/>
    </location>
</feature>
<feature type="sequence conflict" description="In Ref. 2; BAB25160." evidence="6" ref="2">
    <original>R</original>
    <variation>G</variation>
    <location>
        <position position="392"/>
    </location>
</feature>
<feature type="sequence conflict" description="In Ref. 1; BAA93009/BAA93008." evidence="6" ref="1">
    <original>I</original>
    <variation>T</variation>
    <location>
        <position position="398"/>
    </location>
</feature>
<reference key="1">
    <citation type="journal article" date="2000" name="Eur. J. Biochem.">
        <title>cDNA cloning, genomic cloning, and tissue-specific regulation of mouse cerebroside sulfotransferase.</title>
        <authorList>
            <person name="Hirahara Y."/>
            <person name="Tsuda M."/>
            <person name="Wada Y."/>
            <person name="Honke K."/>
        </authorList>
    </citation>
    <scope>NUCLEOTIDE SEQUENCE [GENOMIC DNA / MRNA]</scope>
    <scope>TISSUE SPECIFICITY</scope>
    <source>
        <tissue>Kidney</tissue>
    </source>
</reference>
<reference key="2">
    <citation type="journal article" date="2005" name="Science">
        <title>The transcriptional landscape of the mammalian genome.</title>
        <authorList>
            <person name="Carninci P."/>
            <person name="Kasukawa T."/>
            <person name="Katayama S."/>
            <person name="Gough J."/>
            <person name="Frith M.C."/>
            <person name="Maeda N."/>
            <person name="Oyama R."/>
            <person name="Ravasi T."/>
            <person name="Lenhard B."/>
            <person name="Wells C."/>
            <person name="Kodzius R."/>
            <person name="Shimokawa K."/>
            <person name="Bajic V.B."/>
            <person name="Brenner S.E."/>
            <person name="Batalov S."/>
            <person name="Forrest A.R."/>
            <person name="Zavolan M."/>
            <person name="Davis M.J."/>
            <person name="Wilming L.G."/>
            <person name="Aidinis V."/>
            <person name="Allen J.E."/>
            <person name="Ambesi-Impiombato A."/>
            <person name="Apweiler R."/>
            <person name="Aturaliya R.N."/>
            <person name="Bailey T.L."/>
            <person name="Bansal M."/>
            <person name="Baxter L."/>
            <person name="Beisel K.W."/>
            <person name="Bersano T."/>
            <person name="Bono H."/>
            <person name="Chalk A.M."/>
            <person name="Chiu K.P."/>
            <person name="Choudhary V."/>
            <person name="Christoffels A."/>
            <person name="Clutterbuck D.R."/>
            <person name="Crowe M.L."/>
            <person name="Dalla E."/>
            <person name="Dalrymple B.P."/>
            <person name="de Bono B."/>
            <person name="Della Gatta G."/>
            <person name="di Bernardo D."/>
            <person name="Down T."/>
            <person name="Engstrom P."/>
            <person name="Fagiolini M."/>
            <person name="Faulkner G."/>
            <person name="Fletcher C.F."/>
            <person name="Fukushima T."/>
            <person name="Furuno M."/>
            <person name="Futaki S."/>
            <person name="Gariboldi M."/>
            <person name="Georgii-Hemming P."/>
            <person name="Gingeras T.R."/>
            <person name="Gojobori T."/>
            <person name="Green R.E."/>
            <person name="Gustincich S."/>
            <person name="Harbers M."/>
            <person name="Hayashi Y."/>
            <person name="Hensch T.K."/>
            <person name="Hirokawa N."/>
            <person name="Hill D."/>
            <person name="Huminiecki L."/>
            <person name="Iacono M."/>
            <person name="Ikeo K."/>
            <person name="Iwama A."/>
            <person name="Ishikawa T."/>
            <person name="Jakt M."/>
            <person name="Kanapin A."/>
            <person name="Katoh M."/>
            <person name="Kawasawa Y."/>
            <person name="Kelso J."/>
            <person name="Kitamura H."/>
            <person name="Kitano H."/>
            <person name="Kollias G."/>
            <person name="Krishnan S.P."/>
            <person name="Kruger A."/>
            <person name="Kummerfeld S.K."/>
            <person name="Kurochkin I.V."/>
            <person name="Lareau L.F."/>
            <person name="Lazarevic D."/>
            <person name="Lipovich L."/>
            <person name="Liu J."/>
            <person name="Liuni S."/>
            <person name="McWilliam S."/>
            <person name="Madan Babu M."/>
            <person name="Madera M."/>
            <person name="Marchionni L."/>
            <person name="Matsuda H."/>
            <person name="Matsuzawa S."/>
            <person name="Miki H."/>
            <person name="Mignone F."/>
            <person name="Miyake S."/>
            <person name="Morris K."/>
            <person name="Mottagui-Tabar S."/>
            <person name="Mulder N."/>
            <person name="Nakano N."/>
            <person name="Nakauchi H."/>
            <person name="Ng P."/>
            <person name="Nilsson R."/>
            <person name="Nishiguchi S."/>
            <person name="Nishikawa S."/>
            <person name="Nori F."/>
            <person name="Ohara O."/>
            <person name="Okazaki Y."/>
            <person name="Orlando V."/>
            <person name="Pang K.C."/>
            <person name="Pavan W.J."/>
            <person name="Pavesi G."/>
            <person name="Pesole G."/>
            <person name="Petrovsky N."/>
            <person name="Piazza S."/>
            <person name="Reed J."/>
            <person name="Reid J.F."/>
            <person name="Ring B.Z."/>
            <person name="Ringwald M."/>
            <person name="Rost B."/>
            <person name="Ruan Y."/>
            <person name="Salzberg S.L."/>
            <person name="Sandelin A."/>
            <person name="Schneider C."/>
            <person name="Schoenbach C."/>
            <person name="Sekiguchi K."/>
            <person name="Semple C.A."/>
            <person name="Seno S."/>
            <person name="Sessa L."/>
            <person name="Sheng Y."/>
            <person name="Shibata Y."/>
            <person name="Shimada H."/>
            <person name="Shimada K."/>
            <person name="Silva D."/>
            <person name="Sinclair B."/>
            <person name="Sperling S."/>
            <person name="Stupka E."/>
            <person name="Sugiura K."/>
            <person name="Sultana R."/>
            <person name="Takenaka Y."/>
            <person name="Taki K."/>
            <person name="Tammoja K."/>
            <person name="Tan S.L."/>
            <person name="Tang S."/>
            <person name="Taylor M.S."/>
            <person name="Tegner J."/>
            <person name="Teichmann S.A."/>
            <person name="Ueda H.R."/>
            <person name="van Nimwegen E."/>
            <person name="Verardo R."/>
            <person name="Wei C.L."/>
            <person name="Yagi K."/>
            <person name="Yamanishi H."/>
            <person name="Zabarovsky E."/>
            <person name="Zhu S."/>
            <person name="Zimmer A."/>
            <person name="Hide W."/>
            <person name="Bult C."/>
            <person name="Grimmond S.M."/>
            <person name="Teasdale R.D."/>
            <person name="Liu E.T."/>
            <person name="Brusic V."/>
            <person name="Quackenbush J."/>
            <person name="Wahlestedt C."/>
            <person name="Mattick J.S."/>
            <person name="Hume D.A."/>
            <person name="Kai C."/>
            <person name="Sasaki D."/>
            <person name="Tomaru Y."/>
            <person name="Fukuda S."/>
            <person name="Kanamori-Katayama M."/>
            <person name="Suzuki M."/>
            <person name="Aoki J."/>
            <person name="Arakawa T."/>
            <person name="Iida J."/>
            <person name="Imamura K."/>
            <person name="Itoh M."/>
            <person name="Kato T."/>
            <person name="Kawaji H."/>
            <person name="Kawagashira N."/>
            <person name="Kawashima T."/>
            <person name="Kojima M."/>
            <person name="Kondo S."/>
            <person name="Konno H."/>
            <person name="Nakano K."/>
            <person name="Ninomiya N."/>
            <person name="Nishio T."/>
            <person name="Okada M."/>
            <person name="Plessy C."/>
            <person name="Shibata K."/>
            <person name="Shiraki T."/>
            <person name="Suzuki S."/>
            <person name="Tagami M."/>
            <person name="Waki K."/>
            <person name="Watahiki A."/>
            <person name="Okamura-Oho Y."/>
            <person name="Suzuki H."/>
            <person name="Kawai J."/>
            <person name="Hayashizaki Y."/>
        </authorList>
    </citation>
    <scope>NUCLEOTIDE SEQUENCE [LARGE SCALE MRNA]</scope>
    <source>
        <strain>C57BL/6J</strain>
        <tissue>Pancreas</tissue>
    </source>
</reference>
<reference key="3">
    <citation type="journal article" date="2004" name="Genome Res.">
        <title>The status, quality, and expansion of the NIH full-length cDNA project: the Mammalian Gene Collection (MGC).</title>
        <authorList>
            <consortium name="The MGC Project Team"/>
        </authorList>
    </citation>
    <scope>NUCLEOTIDE SEQUENCE [LARGE SCALE MRNA]</scope>
    <source>
        <tissue>Colon</tissue>
    </source>
</reference>
<reference key="4">
    <citation type="journal article" date="2002" name="Proc. Natl. Acad. Sci. U.S.A.">
        <title>Paranodal junction formation and spermatogenesis require sulfoglycolipids.</title>
        <authorList>
            <person name="Honke K."/>
            <person name="Hirahara Y."/>
            <person name="Dupree J."/>
            <person name="Suzuki K."/>
            <person name="Popko B."/>
            <person name="Fukushima K."/>
            <person name="Fukushima J."/>
            <person name="Nagasawa T."/>
            <person name="Yoshida N."/>
            <person name="Wada Y."/>
            <person name="Taniguchi N."/>
        </authorList>
    </citation>
    <scope>FUNCTION</scope>
    <scope>DISRUPTION PHENOTYPE</scope>
    <scope>CATALYTIC ACTIVITY</scope>
</reference>
<comment type="function">
    <text evidence="1 4">Catalyzes the transfer of a sulfate group to position 3 of non-reducing beta-galactosyl residues in glycerolipids and sphingolipids, therefore participates in the biosynthesis of sulfoglycolipids (PubMed:11917099). Catalyzes the synthesis of galactosylceramide sulfate (sulfatide), a major lipid component of the myelin sheath and of monogalactosylalkylacylglycerol sulfate (seminolipid), present in spermatocytes (PubMed:11917099). Seems to prefer beta-glycosides at the non-reducing termini of sugar chains attached to a lipid moiety. Also acts on lactosylceramide, galactosyl 1-alkyl-2-sn-glycerol and galactosyl diacylglycerol (in vitro) (By similarity).</text>
</comment>
<comment type="catalytic activity">
    <reaction evidence="4">
        <text>a beta-D-galactosyl-(1&lt;-&gt;1')-N-acylsphing-4-enine + 3'-phosphoadenylyl sulfate = an N-acyl-1-beta-D-(3-O-sulfo)-galactosyl-sphing-4-enine + adenosine 3',5'-bisphosphate + H(+)</text>
        <dbReference type="Rhea" id="RHEA:20613"/>
        <dbReference type="ChEBI" id="CHEBI:15378"/>
        <dbReference type="ChEBI" id="CHEBI:18390"/>
        <dbReference type="ChEBI" id="CHEBI:58339"/>
        <dbReference type="ChEBI" id="CHEBI:58343"/>
        <dbReference type="ChEBI" id="CHEBI:75956"/>
        <dbReference type="EC" id="2.8.2.11"/>
    </reaction>
    <physiologicalReaction direction="left-to-right" evidence="4">
        <dbReference type="Rhea" id="RHEA:20614"/>
    </physiologicalReaction>
</comment>
<comment type="catalytic activity">
    <reaction evidence="4">
        <text>a 1-O-alkyl-2-acyl-3-O-(beta-D-galactosyl)-sn-glycerol + 3'-phosphoadenylyl sulfate = a 1-O-alkyl-2-acyl-3-(beta-D-3-sulfogalactosyl)-sn-glycerol + adenosine 3',5'-bisphosphate + H(+)</text>
        <dbReference type="Rhea" id="RHEA:41744"/>
        <dbReference type="ChEBI" id="CHEBI:15378"/>
        <dbReference type="ChEBI" id="CHEBI:58339"/>
        <dbReference type="ChEBI" id="CHEBI:58343"/>
        <dbReference type="ChEBI" id="CHEBI:78428"/>
        <dbReference type="ChEBI" id="CHEBI:78429"/>
        <dbReference type="EC" id="2.8.2.11"/>
    </reaction>
    <physiologicalReaction direction="left-to-right" evidence="4">
        <dbReference type="Rhea" id="RHEA:41745"/>
    </physiologicalReaction>
</comment>
<comment type="catalytic activity">
    <reaction evidence="1">
        <text>a beta-D-Gal-(1&lt;-&gt;1')-ceramide + 3'-phosphoadenylyl sulfate = 1-(3-O-sulfo-beta-D-galactosyl)-ceramide + adenosine 3',5'-bisphosphate + H(+)</text>
        <dbReference type="Rhea" id="RHEA:43304"/>
        <dbReference type="ChEBI" id="CHEBI:15378"/>
        <dbReference type="ChEBI" id="CHEBI:58339"/>
        <dbReference type="ChEBI" id="CHEBI:58343"/>
        <dbReference type="ChEBI" id="CHEBI:82953"/>
        <dbReference type="ChEBI" id="CHEBI:143593"/>
    </reaction>
    <physiologicalReaction direction="left-to-right" evidence="1">
        <dbReference type="Rhea" id="RHEA:43305"/>
    </physiologicalReaction>
</comment>
<comment type="catalytic activity">
    <reaction evidence="1">
        <text>a 1,2-diacyl-3-O-(beta-D-galactosyl)-sn-glycerol + 3'-phosphoadenylyl sulfate = 1,2-diacyl-3-(3-O-sulfo-beta-D-galactosyl)-sn-glycerol + adenosine 3',5'-bisphosphate + H(+)</text>
        <dbReference type="Rhea" id="RHEA:41748"/>
        <dbReference type="ChEBI" id="CHEBI:15378"/>
        <dbReference type="ChEBI" id="CHEBI:17615"/>
        <dbReference type="ChEBI" id="CHEBI:58339"/>
        <dbReference type="ChEBI" id="CHEBI:58343"/>
        <dbReference type="ChEBI" id="CHEBI:157618"/>
    </reaction>
    <physiologicalReaction direction="left-to-right" evidence="1">
        <dbReference type="Rhea" id="RHEA:41749"/>
    </physiologicalReaction>
</comment>
<comment type="catalytic activity">
    <reaction evidence="1">
        <text>a beta-D-Gal-(1-&gt;4)-beta-D-Glc-(1&lt;-&gt;1)-Cer(d18:1(4E)) + 3'-phosphoadenylyl sulfate = beta-D-3-sulfogalactosyl-(1-&gt;4)-beta-D-glucosyl-(1&lt;-&gt;1')-N-acylsphing-4-enine + adenosine 3',5'-bisphosphate + H(+)</text>
        <dbReference type="Rhea" id="RHEA:41736"/>
        <dbReference type="ChEBI" id="CHEBI:15378"/>
        <dbReference type="ChEBI" id="CHEBI:17950"/>
        <dbReference type="ChEBI" id="CHEBI:58339"/>
        <dbReference type="ChEBI" id="CHEBI:58343"/>
        <dbReference type="ChEBI" id="CHEBI:78426"/>
    </reaction>
    <physiologicalReaction direction="left-to-right" evidence="1">
        <dbReference type="Rhea" id="RHEA:41737"/>
    </physiologicalReaction>
</comment>
<comment type="pathway">
    <text evidence="4">Lipid metabolism; sphingolipid metabolism.</text>
</comment>
<comment type="subcellular location">
    <subcellularLocation>
        <location evidence="6">Golgi apparatus membrane</location>
        <topology evidence="6">Single-pass type II membrane protein</topology>
    </subcellularLocation>
</comment>
<comment type="tissue specificity">
    <text evidence="3">Expressed in brain, testis, kidney, stomach, small intestine, liver, and lung. Not detected in heart, skeletal muscle, and spleen.</text>
</comment>
<comment type="disruption phenotype">
    <text evidence="4">Mice homozygous for a null mutation of the CST gene born healthy and display hindlimb weakness from week 6 of age and subsequently show a prenounced tremor and progressive ataxia. Myelin vacuolation is observed in the cerebellar white matter, diencephalon, brainstem and spinal anterior column. Male mice were infertile due to a blocked spermatogenesis.</text>
</comment>
<comment type="similarity">
    <text evidence="6">Belongs to the galactose-3-O-sulfotransferase family.</text>
</comment>
<evidence type="ECO:0000250" key="1">
    <source>
        <dbReference type="UniProtKB" id="Q99999"/>
    </source>
</evidence>
<evidence type="ECO:0000255" key="2"/>
<evidence type="ECO:0000269" key="3">
    <source>
    </source>
</evidence>
<evidence type="ECO:0000269" key="4">
    <source>
    </source>
</evidence>
<evidence type="ECO:0000303" key="5">
    <source>
    </source>
</evidence>
<evidence type="ECO:0000305" key="6"/>
<evidence type="ECO:0000312" key="7">
    <source>
        <dbReference type="MGI" id="MGI:1858277"/>
    </source>
</evidence>
<organism>
    <name type="scientific">Mus musculus</name>
    <name type="common">Mouse</name>
    <dbReference type="NCBI Taxonomy" id="10090"/>
    <lineage>
        <taxon>Eukaryota</taxon>
        <taxon>Metazoa</taxon>
        <taxon>Chordata</taxon>
        <taxon>Craniata</taxon>
        <taxon>Vertebrata</taxon>
        <taxon>Euteleostomi</taxon>
        <taxon>Mammalia</taxon>
        <taxon>Eutheria</taxon>
        <taxon>Euarchontoglires</taxon>
        <taxon>Glires</taxon>
        <taxon>Rodentia</taxon>
        <taxon>Myomorpha</taxon>
        <taxon>Muroidea</taxon>
        <taxon>Muridae</taxon>
        <taxon>Murinae</taxon>
        <taxon>Mus</taxon>
        <taxon>Mus</taxon>
    </lineage>
</organism>
<gene>
    <name evidence="7" type="primary">Gal3st1</name>
    <name evidence="5" type="synonym">Cst</name>
    <name type="synonym">Gcst</name>
</gene>
<accession>Q9JHE4</accession>
<accession>Q9D8V6</accession>